<feature type="chain" id="PRO_0000058621" description="14-3-3 protein epsilon">
    <location>
        <begin position="1"/>
        <end position="255"/>
    </location>
</feature>
<feature type="region of interest" description="Disordered" evidence="5">
    <location>
        <begin position="234"/>
        <end position="255"/>
    </location>
</feature>
<feature type="site" description="Interaction with phosphoserine on interacting protein" evidence="1">
    <location>
        <position position="57"/>
    </location>
</feature>
<feature type="site" description="Interaction with phosphoserine on interacting protein" evidence="1">
    <location>
        <position position="130"/>
    </location>
</feature>
<feature type="modified residue" description="N-acetylmethionine" evidence="2">
    <location>
        <position position="1"/>
    </location>
</feature>
<feature type="modified residue" description="N6-acetyllysine; alternate" evidence="2">
    <location>
        <position position="50"/>
    </location>
</feature>
<feature type="modified residue" description="Phosphoserine" evidence="4">
    <location>
        <position position="65"/>
    </location>
</feature>
<feature type="modified residue" description="N6-acetyllysine" evidence="2">
    <location>
        <position position="69"/>
    </location>
</feature>
<feature type="modified residue" description="N6-acetyllysine" evidence="2">
    <location>
        <position position="118"/>
    </location>
</feature>
<feature type="modified residue" description="N6-acetyllysine" evidence="2">
    <location>
        <position position="123"/>
    </location>
</feature>
<feature type="modified residue" description="Phosphotyrosine" evidence="4">
    <location>
        <position position="131"/>
    </location>
</feature>
<feature type="modified residue" description="Phosphothreonine" evidence="4">
    <location>
        <position position="137"/>
    </location>
</feature>
<feature type="modified residue" description="Phosphoserine" evidence="2">
    <location>
        <position position="210"/>
    </location>
</feature>
<feature type="modified residue" description="Phosphothreonine" evidence="2">
    <location>
        <position position="232"/>
    </location>
</feature>
<feature type="cross-link" description="Glycyl lysine isopeptide (Lys-Gly) (interchain with G-Cter in SUMO2); alternate" evidence="2">
    <location>
        <position position="50"/>
    </location>
</feature>
<feature type="sequence conflict" description="In Ref. 3; AA sequence." evidence="7" ref="3">
    <original>H</original>
    <variation>Y</variation>
    <location>
        <position position="129"/>
    </location>
</feature>
<proteinExistence type="evidence at protein level"/>
<keyword id="KW-0007">Acetylation</keyword>
<keyword id="KW-0963">Cytoplasm</keyword>
<keyword id="KW-0903">Direct protein sequencing</keyword>
<keyword id="KW-1017">Isopeptide bond</keyword>
<keyword id="KW-0597">Phosphoprotein</keyword>
<keyword id="KW-1185">Reference proteome</keyword>
<keyword id="KW-0832">Ubl conjugation</keyword>
<comment type="function">
    <text>Adapter protein implicated in the regulation of a large spectrum of both general and specialized signaling pathways. Binds to a large number of partners, usually by recognition of a phosphoserine or phosphothreonine motif. Binding generally results in the modulation of the activity of the binding partner.</text>
</comment>
<comment type="subunit">
    <text evidence="2 3 6">Homodimer. Heterodimerizes with YWHAZ. Interacts with NDEL1, ARHGEF28 and TIAM2. Interacts with ABL1 (phosphorylated form); the interaction retains it in the cytoplasm. Weakly interacts with CDKN1B. Interacts with GAB2. Interacts with phosphorylated GRB10 (By similarity). Interacts with PKA-phosphorylated AANAT (PubMed:11427721). Interacts with the phosphorylated (by AKT1) form of SRPK2. Interacts with KSR1 (By similarity). Interacts with DENND1A (By similarity). Interacts with the phosphorylated (by AKT1) form of SRPK2. Interacts with TIAM2. Interacts with PI4KB, TBC1D22A and TBC1D22B. Interacts with the 'Ser-1134' and 'Ser-1161' phosphorylated form of SOS1 (By similarity). Interacts with ZFP36 (via phosphorylated form) (By similarity). Interacts with SLITRK1 (By similarity). Interacts with RIPOR2 (By similarity). Interacts with KLHL22; required for the nuclear localization of KLHL22 upon amino acid starvation (By similarity). Interacts with CRTC1 (By similarity). Interacts with CRTC2 (probably when phosphorylated at 'Ser-173') (By similarity). Interacts with CRTC3 (probably when phosphorylated at 'Ser-138' and/or 'Ser-249') (By similarity). Interacts with ATP2B1 and ATP2B3; this interaction inhibits calcium-transporting ATPase activity (By similarity). Interacts with MEFV (By similarity). Interacts with GPR15; this interaction promotes ER-to-Golgi transport of GPR15 (By similarity).</text>
</comment>
<comment type="subcellular location">
    <subcellularLocation>
        <location evidence="1">Cytoplasm</location>
    </subcellularLocation>
    <subcellularLocation>
        <location evidence="1">Melanosome</location>
    </subcellularLocation>
</comment>
<comment type="similarity">
    <text evidence="7">Belongs to the 14-3-3 family.</text>
</comment>
<organism>
    <name type="scientific">Ovis aries</name>
    <name type="common">Sheep</name>
    <dbReference type="NCBI Taxonomy" id="9940"/>
    <lineage>
        <taxon>Eukaryota</taxon>
        <taxon>Metazoa</taxon>
        <taxon>Chordata</taxon>
        <taxon>Craniata</taxon>
        <taxon>Vertebrata</taxon>
        <taxon>Euteleostomi</taxon>
        <taxon>Mammalia</taxon>
        <taxon>Eutheria</taxon>
        <taxon>Laurasiatheria</taxon>
        <taxon>Artiodactyla</taxon>
        <taxon>Ruminantia</taxon>
        <taxon>Pecora</taxon>
        <taxon>Bovidae</taxon>
        <taxon>Caprinae</taxon>
        <taxon>Ovis</taxon>
    </lineage>
</organism>
<name>1433E_SHEEP</name>
<gene>
    <name type="primary">YWHAE</name>
</gene>
<reference key="1">
    <citation type="journal article" date="1994" name="DNA Cell Biol.">
        <title>Cloning and characterization of the epsilon and zeta isoforms of the 14-3-3 proteins.</title>
        <authorList>
            <person name="Roseboom P.H."/>
            <person name="Weller J.L."/>
            <person name="Babila T."/>
            <person name="Aitken A."/>
            <person name="Sellers L.A."/>
            <person name="Moffet J.R."/>
            <person name="Namboodiri M.A."/>
            <person name="Klein D.C."/>
        </authorList>
    </citation>
    <scope>NUCLEOTIDE SEQUENCE [MRNA]</scope>
    <source>
        <tissue>Pineal gland</tissue>
    </source>
</reference>
<reference key="2">
    <citation type="journal article" date="1992" name="Eur. J. Biochem.">
        <title>Multiple isoforms of a protein kinase C inhibitor (KCIP-1/14-3-3) from sheep brain. Amino acid sequence of phosphorylated forms.</title>
        <authorList>
            <person name="Toker A."/>
            <person name="Sellers L.A."/>
            <person name="Amess B."/>
            <person name="Patel Y."/>
            <person name="Harris A."/>
            <person name="Aitken A."/>
        </authorList>
    </citation>
    <scope>PROTEIN SEQUENCE OF 1-152; 165-184 AND 216-255</scope>
    <source>
        <tissue>Brain</tissue>
    </source>
</reference>
<reference key="3">
    <citation type="journal article" date="1990" name="Eur. J. Biochem.">
        <title>Protein kinase C inhibitor proteins. Purification from sheep brain and sequence similarity to lipocortins and 14-3-3 protein.</title>
        <authorList>
            <person name="Toker A."/>
            <person name="Ellis C.A."/>
            <person name="Sellers L.A."/>
            <person name="Aitken A."/>
        </authorList>
    </citation>
    <scope>PROTEIN SEQUENCE OF 1-23 AND 125-140</scope>
    <source>
        <tissue>Brain</tissue>
    </source>
</reference>
<reference key="4">
    <citation type="journal article" date="2001" name="Proc. Natl. Acad. Sci. U.S.A.">
        <title>Role of a pineal cAMP-operated arylalkylamine N-acetyltransferase/14-3-3-binding switch in melatonin synthesis.</title>
        <authorList>
            <person name="Ganguly S."/>
            <person name="Gastel J.A."/>
            <person name="Weller J.L."/>
            <person name="Schwartz C."/>
            <person name="Jaffe H."/>
            <person name="Namboodiri M.A."/>
            <person name="Coon S.L."/>
            <person name="Hickman A.B."/>
            <person name="Rollag M."/>
            <person name="Obsil T."/>
            <person name="Beauverger P."/>
            <person name="Ferry G."/>
            <person name="Boutin J.A."/>
            <person name="Klein D.C."/>
        </authorList>
    </citation>
    <scope>INTERACTION WITH AANAT</scope>
</reference>
<evidence type="ECO:0000250" key="1"/>
<evidence type="ECO:0000250" key="2">
    <source>
        <dbReference type="UniProtKB" id="P62258"/>
    </source>
</evidence>
<evidence type="ECO:0000250" key="3">
    <source>
        <dbReference type="UniProtKB" id="P62259"/>
    </source>
</evidence>
<evidence type="ECO:0000250" key="4">
    <source>
        <dbReference type="UniProtKB" id="P62260"/>
    </source>
</evidence>
<evidence type="ECO:0000256" key="5">
    <source>
        <dbReference type="SAM" id="MobiDB-lite"/>
    </source>
</evidence>
<evidence type="ECO:0000269" key="6">
    <source>
    </source>
</evidence>
<evidence type="ECO:0000305" key="7"/>
<dbReference type="EMBL" id="L07914">
    <property type="protein sequence ID" value="AAC37321.1"/>
    <property type="molecule type" value="mRNA"/>
</dbReference>
<dbReference type="RefSeq" id="XP_027830954.1">
    <property type="nucleotide sequence ID" value="XM_027975153.2"/>
</dbReference>
<dbReference type="SMR" id="P62262"/>
<dbReference type="MINT" id="P62262"/>
<dbReference type="STRING" id="9940.ENSOARP00000013117"/>
<dbReference type="PaxDb" id="9940-ENSOARP00000013117"/>
<dbReference type="Ensembl" id="ENSOART00215076146">
    <property type="protein sequence ID" value="ENSOARP00215041298"/>
    <property type="gene ID" value="ENSOARG00215044981"/>
</dbReference>
<dbReference type="Ensembl" id="ENSOART00220069290">
    <property type="protein sequence ID" value="ENSOARP00220037536"/>
    <property type="gene ID" value="ENSOARG00220041585"/>
</dbReference>
<dbReference type="Ensembl" id="ENSOART00225073682">
    <property type="protein sequence ID" value="ENSOARP00225037322"/>
    <property type="gene ID" value="ENSOARG00225044569"/>
</dbReference>
<dbReference type="GeneID" id="443300"/>
<dbReference type="eggNOG" id="KOG0841">
    <property type="taxonomic scope" value="Eukaryota"/>
</dbReference>
<dbReference type="OrthoDB" id="10260625at2759"/>
<dbReference type="Proteomes" id="UP000002356">
    <property type="component" value="Unplaced"/>
</dbReference>
<dbReference type="GO" id="GO:0005737">
    <property type="term" value="C:cytoplasm"/>
    <property type="evidence" value="ECO:0000250"/>
    <property type="project" value="UniProtKB"/>
</dbReference>
<dbReference type="GO" id="GO:0005829">
    <property type="term" value="C:cytosol"/>
    <property type="evidence" value="ECO:0007669"/>
    <property type="project" value="Ensembl"/>
</dbReference>
<dbReference type="GO" id="GO:0005783">
    <property type="term" value="C:endoplasmic reticulum"/>
    <property type="evidence" value="ECO:0007669"/>
    <property type="project" value="Ensembl"/>
</dbReference>
<dbReference type="GO" id="GO:0042470">
    <property type="term" value="C:melanosome"/>
    <property type="evidence" value="ECO:0007669"/>
    <property type="project" value="UniProtKB-SubCell"/>
</dbReference>
<dbReference type="GO" id="GO:0005634">
    <property type="term" value="C:nucleus"/>
    <property type="evidence" value="ECO:0000250"/>
    <property type="project" value="UniProtKB"/>
</dbReference>
<dbReference type="GO" id="GO:0005886">
    <property type="term" value="C:plasma membrane"/>
    <property type="evidence" value="ECO:0007669"/>
    <property type="project" value="Ensembl"/>
</dbReference>
<dbReference type="GO" id="GO:0019855">
    <property type="term" value="F:calcium channel inhibitor activity"/>
    <property type="evidence" value="ECO:0007669"/>
    <property type="project" value="Ensembl"/>
</dbReference>
<dbReference type="GO" id="GO:0042826">
    <property type="term" value="F:histone deacetylase binding"/>
    <property type="evidence" value="ECO:0007669"/>
    <property type="project" value="Ensembl"/>
</dbReference>
<dbReference type="GO" id="GO:0042802">
    <property type="term" value="F:identical protein binding"/>
    <property type="evidence" value="ECO:0007669"/>
    <property type="project" value="Ensembl"/>
</dbReference>
<dbReference type="GO" id="GO:0050815">
    <property type="term" value="F:phosphoserine residue binding"/>
    <property type="evidence" value="ECO:0007669"/>
    <property type="project" value="Ensembl"/>
</dbReference>
<dbReference type="GO" id="GO:0015459">
    <property type="term" value="F:potassium channel regulator activity"/>
    <property type="evidence" value="ECO:0007669"/>
    <property type="project" value="Ensembl"/>
</dbReference>
<dbReference type="GO" id="GO:0019904">
    <property type="term" value="F:protein domain specific binding"/>
    <property type="evidence" value="ECO:0007669"/>
    <property type="project" value="Ensembl"/>
</dbReference>
<dbReference type="GO" id="GO:0046982">
    <property type="term" value="F:protein heterodimerization activity"/>
    <property type="evidence" value="ECO:0007669"/>
    <property type="project" value="Ensembl"/>
</dbReference>
<dbReference type="GO" id="GO:0019903">
    <property type="term" value="F:protein phosphatase binding"/>
    <property type="evidence" value="ECO:0007669"/>
    <property type="project" value="Ensembl"/>
</dbReference>
<dbReference type="GO" id="GO:0004864">
    <property type="term" value="F:protein phosphatase inhibitor activity"/>
    <property type="evidence" value="ECO:0007669"/>
    <property type="project" value="Ensembl"/>
</dbReference>
<dbReference type="GO" id="GO:0140311">
    <property type="term" value="F:protein sequestering activity"/>
    <property type="evidence" value="ECO:0007669"/>
    <property type="project" value="Ensembl"/>
</dbReference>
<dbReference type="GO" id="GO:0097110">
    <property type="term" value="F:scaffold protein binding"/>
    <property type="evidence" value="ECO:0007669"/>
    <property type="project" value="Ensembl"/>
</dbReference>
<dbReference type="GO" id="GO:0035591">
    <property type="term" value="F:signaling adaptor activity"/>
    <property type="evidence" value="ECO:0007669"/>
    <property type="project" value="Ensembl"/>
</dbReference>
<dbReference type="GO" id="GO:0044325">
    <property type="term" value="F:transmembrane transporter binding"/>
    <property type="evidence" value="ECO:0007669"/>
    <property type="project" value="Ensembl"/>
</dbReference>
<dbReference type="GO" id="GO:0031625">
    <property type="term" value="F:ubiquitin protein ligase binding"/>
    <property type="evidence" value="ECO:0007669"/>
    <property type="project" value="Ensembl"/>
</dbReference>
<dbReference type="GO" id="GO:0034605">
    <property type="term" value="P:cellular response to heat"/>
    <property type="evidence" value="ECO:0000250"/>
    <property type="project" value="UniProtKB"/>
</dbReference>
<dbReference type="GO" id="GO:0021987">
    <property type="term" value="P:cerebral cortex development"/>
    <property type="evidence" value="ECO:0007669"/>
    <property type="project" value="Ensembl"/>
</dbReference>
<dbReference type="GO" id="GO:0002753">
    <property type="term" value="P:cytoplasmic pattern recognition receptor signaling pathway"/>
    <property type="evidence" value="ECO:0007669"/>
    <property type="project" value="Ensembl"/>
</dbReference>
<dbReference type="GO" id="GO:0021766">
    <property type="term" value="P:hippocampus development"/>
    <property type="evidence" value="ECO:0007669"/>
    <property type="project" value="Ensembl"/>
</dbReference>
<dbReference type="GO" id="GO:0030007">
    <property type="term" value="P:intracellular potassium ion homeostasis"/>
    <property type="evidence" value="ECO:0007669"/>
    <property type="project" value="Ensembl"/>
</dbReference>
<dbReference type="GO" id="GO:0000165">
    <property type="term" value="P:MAPK cascade"/>
    <property type="evidence" value="ECO:0000250"/>
    <property type="project" value="UniProtKB"/>
</dbReference>
<dbReference type="GO" id="GO:1905913">
    <property type="term" value="P:negative regulation of calcium ion export across plasma membrane"/>
    <property type="evidence" value="ECO:0007669"/>
    <property type="project" value="Ensembl"/>
</dbReference>
<dbReference type="GO" id="GO:0034122">
    <property type="term" value="P:negative regulation of toll-like receptor signaling pathway"/>
    <property type="evidence" value="ECO:0007669"/>
    <property type="project" value="Ensembl"/>
</dbReference>
<dbReference type="GO" id="GO:0001764">
    <property type="term" value="P:neuron migration"/>
    <property type="evidence" value="ECO:0007669"/>
    <property type="project" value="Ensembl"/>
</dbReference>
<dbReference type="GO" id="GO:0035332">
    <property type="term" value="P:positive regulation of hippo signaling"/>
    <property type="evidence" value="ECO:0007669"/>
    <property type="project" value="Ensembl"/>
</dbReference>
<dbReference type="GO" id="GO:0046827">
    <property type="term" value="P:positive regulation of protein export from nucleus"/>
    <property type="evidence" value="ECO:0000250"/>
    <property type="project" value="UniProtKB"/>
</dbReference>
<dbReference type="GO" id="GO:0070972">
    <property type="term" value="P:protein localization to endoplasmic reticulum"/>
    <property type="evidence" value="ECO:0007669"/>
    <property type="project" value="Ensembl"/>
</dbReference>
<dbReference type="GO" id="GO:0034504">
    <property type="term" value="P:protein localization to nucleus"/>
    <property type="evidence" value="ECO:0000250"/>
    <property type="project" value="UniProtKB"/>
</dbReference>
<dbReference type="GO" id="GO:0006605">
    <property type="term" value="P:protein targeting"/>
    <property type="evidence" value="ECO:0007669"/>
    <property type="project" value="Ensembl"/>
</dbReference>
<dbReference type="GO" id="GO:0051480">
    <property type="term" value="P:regulation of cytosolic calcium ion concentration"/>
    <property type="evidence" value="ECO:0007669"/>
    <property type="project" value="Ensembl"/>
</dbReference>
<dbReference type="GO" id="GO:0060306">
    <property type="term" value="P:regulation of membrane repolarization"/>
    <property type="evidence" value="ECO:0007669"/>
    <property type="project" value="Ensembl"/>
</dbReference>
<dbReference type="GO" id="GO:1901379">
    <property type="term" value="P:regulation of potassium ion transmembrane transport"/>
    <property type="evidence" value="ECO:0007669"/>
    <property type="project" value="Ensembl"/>
</dbReference>
<dbReference type="CDD" id="cd10020">
    <property type="entry name" value="14-3-3_epsilon"/>
    <property type="match status" value="1"/>
</dbReference>
<dbReference type="FunFam" id="1.20.190.20:FF:000002">
    <property type="entry name" value="14-3-3 protein epsilon"/>
    <property type="match status" value="1"/>
</dbReference>
<dbReference type="Gene3D" id="1.20.190.20">
    <property type="entry name" value="14-3-3 domain"/>
    <property type="match status" value="1"/>
</dbReference>
<dbReference type="InterPro" id="IPR000308">
    <property type="entry name" value="14-3-3"/>
</dbReference>
<dbReference type="InterPro" id="IPR023409">
    <property type="entry name" value="14-3-3_CS"/>
</dbReference>
<dbReference type="InterPro" id="IPR036815">
    <property type="entry name" value="14-3-3_dom_sf"/>
</dbReference>
<dbReference type="InterPro" id="IPR023410">
    <property type="entry name" value="14-3-3_domain"/>
</dbReference>
<dbReference type="PANTHER" id="PTHR18860">
    <property type="entry name" value="14-3-3 PROTEIN"/>
    <property type="match status" value="1"/>
</dbReference>
<dbReference type="Pfam" id="PF00244">
    <property type="entry name" value="14-3-3"/>
    <property type="match status" value="1"/>
</dbReference>
<dbReference type="PIRSF" id="PIRSF000868">
    <property type="entry name" value="14-3-3"/>
    <property type="match status" value="1"/>
</dbReference>
<dbReference type="PRINTS" id="PR00305">
    <property type="entry name" value="1433ZETA"/>
</dbReference>
<dbReference type="SMART" id="SM00101">
    <property type="entry name" value="14_3_3"/>
    <property type="match status" value="1"/>
</dbReference>
<dbReference type="SUPFAM" id="SSF48445">
    <property type="entry name" value="14-3-3 protein"/>
    <property type="match status" value="1"/>
</dbReference>
<dbReference type="PROSITE" id="PS00796">
    <property type="entry name" value="1433_1"/>
    <property type="match status" value="1"/>
</dbReference>
<dbReference type="PROSITE" id="PS00797">
    <property type="entry name" value="1433_2"/>
    <property type="match status" value="1"/>
</dbReference>
<sequence>MDDREDLVYQAKLAEQAERYDEMVESMKKVAGMDVELTVEERNLLSVAYKNVIGARRASWRIISSIEQKEENKGGEDKLKMIREYRQMVETELKLICCDILDVLDKHLIPAANTGESKVFYYKMKGDYHRYLAEFATGNDRKEAAENSLVAYKAASDIAMTELPPTHPIRLGLALNFSVFYYEILNSPDRACRLAKAAFDDAIAELDTLSEESYKDSTLIMQLLRDNLTLWTSDMQGDGEEQNKEALQDVEDENQ</sequence>
<protein>
    <recommendedName>
        <fullName>14-3-3 protein epsilon</fullName>
        <shortName>14-3-3E</shortName>
    </recommendedName>
    <alternativeName>
        <fullName>Protein kinase C inhibitor protein 1</fullName>
        <shortName>KCIP-1</shortName>
    </alternativeName>
</protein>
<accession>P62262</accession>
<accession>P29360</accession>
<accession>P42655</accession>
<accession>Q63631</accession>